<feature type="chain" id="PRO_1000119422" description="Small ribosomal subunit protein uS2">
    <location>
        <begin position="1"/>
        <end position="271"/>
    </location>
</feature>
<feature type="region of interest" description="Disordered" evidence="2">
    <location>
        <begin position="229"/>
        <end position="271"/>
    </location>
</feature>
<feature type="compositionally biased region" description="Basic and acidic residues" evidence="2">
    <location>
        <begin position="229"/>
        <end position="242"/>
    </location>
</feature>
<feature type="compositionally biased region" description="Low complexity" evidence="2">
    <location>
        <begin position="243"/>
        <end position="271"/>
    </location>
</feature>
<keyword id="KW-0687">Ribonucleoprotein</keyword>
<keyword id="KW-0689">Ribosomal protein</keyword>
<gene>
    <name evidence="1" type="primary">rpsB</name>
    <name type="ordered locus">DvMF_2924</name>
</gene>
<reference key="1">
    <citation type="submission" date="2008-10" db="EMBL/GenBank/DDBJ databases">
        <title>Complete sequence of Desulfovibrio vulgaris str. 'Miyazaki F'.</title>
        <authorList>
            <person name="Lucas S."/>
            <person name="Copeland A."/>
            <person name="Lapidus A."/>
            <person name="Glavina del Rio T."/>
            <person name="Dalin E."/>
            <person name="Tice H."/>
            <person name="Bruce D."/>
            <person name="Goodwin L."/>
            <person name="Pitluck S."/>
            <person name="Sims D."/>
            <person name="Brettin T."/>
            <person name="Detter J.C."/>
            <person name="Han C."/>
            <person name="Larimer F."/>
            <person name="Land M."/>
            <person name="Hauser L."/>
            <person name="Kyrpides N."/>
            <person name="Mikhailova N."/>
            <person name="Hazen T.C."/>
            <person name="Richardson P."/>
        </authorList>
    </citation>
    <scope>NUCLEOTIDE SEQUENCE [LARGE SCALE GENOMIC DNA]</scope>
    <source>
        <strain>DSM 19637 / Miyazaki F</strain>
    </source>
</reference>
<name>RS2_NITV9</name>
<sequence length="271" mass="29825">MAYVSMKQMLETGVHFGHQTRRWNPKMRPFIFGARNGIHIIDLQQTVKLFRTAHDKVVDTVVNGGKVVFIGTKRQAQEAVAVEAGRAGQFYVTNRWMGGTLTNFTTIQKSIDRLKKLEAMFADGTVNKYQKKEILRMQREMDKLLATLGGIKEMDRLPQLAFIVDPHREDIAVKECRKLGIPIVAVTDTNCDPDLIDFVIPGNDDAIRAIKLFVAAIADACLEGDAMRKERKGKDAEEELKKAAAPKAAPAAEAAPAAEAPAAPVVEAAAE</sequence>
<protein>
    <recommendedName>
        <fullName evidence="1">Small ribosomal subunit protein uS2</fullName>
    </recommendedName>
    <alternativeName>
        <fullName evidence="3">30S ribosomal protein S2</fullName>
    </alternativeName>
</protein>
<dbReference type="EMBL" id="CP001197">
    <property type="protein sequence ID" value="ACL09861.1"/>
    <property type="molecule type" value="Genomic_DNA"/>
</dbReference>
<dbReference type="SMR" id="B8DSA6"/>
<dbReference type="STRING" id="883.DvMF_2924"/>
<dbReference type="KEGG" id="dvm:DvMF_2924"/>
<dbReference type="eggNOG" id="COG0052">
    <property type="taxonomic scope" value="Bacteria"/>
</dbReference>
<dbReference type="HOGENOM" id="CLU_040318_1_2_7"/>
<dbReference type="OrthoDB" id="9808036at2"/>
<dbReference type="GO" id="GO:0022627">
    <property type="term" value="C:cytosolic small ribosomal subunit"/>
    <property type="evidence" value="ECO:0007669"/>
    <property type="project" value="TreeGrafter"/>
</dbReference>
<dbReference type="GO" id="GO:0003735">
    <property type="term" value="F:structural constituent of ribosome"/>
    <property type="evidence" value="ECO:0007669"/>
    <property type="project" value="InterPro"/>
</dbReference>
<dbReference type="GO" id="GO:0006412">
    <property type="term" value="P:translation"/>
    <property type="evidence" value="ECO:0007669"/>
    <property type="project" value="UniProtKB-UniRule"/>
</dbReference>
<dbReference type="CDD" id="cd01425">
    <property type="entry name" value="RPS2"/>
    <property type="match status" value="1"/>
</dbReference>
<dbReference type="FunFam" id="1.10.287.610:FF:000001">
    <property type="entry name" value="30S ribosomal protein S2"/>
    <property type="match status" value="1"/>
</dbReference>
<dbReference type="Gene3D" id="3.40.50.10490">
    <property type="entry name" value="Glucose-6-phosphate isomerase like protein, domain 1"/>
    <property type="match status" value="1"/>
</dbReference>
<dbReference type="Gene3D" id="1.10.287.610">
    <property type="entry name" value="Helix hairpin bin"/>
    <property type="match status" value="1"/>
</dbReference>
<dbReference type="HAMAP" id="MF_00291_B">
    <property type="entry name" value="Ribosomal_uS2_B"/>
    <property type="match status" value="1"/>
</dbReference>
<dbReference type="InterPro" id="IPR001865">
    <property type="entry name" value="Ribosomal_uS2"/>
</dbReference>
<dbReference type="InterPro" id="IPR005706">
    <property type="entry name" value="Ribosomal_uS2_bac/mit/plastid"/>
</dbReference>
<dbReference type="InterPro" id="IPR018130">
    <property type="entry name" value="Ribosomal_uS2_CS"/>
</dbReference>
<dbReference type="InterPro" id="IPR023591">
    <property type="entry name" value="Ribosomal_uS2_flav_dom_sf"/>
</dbReference>
<dbReference type="NCBIfam" id="TIGR01011">
    <property type="entry name" value="rpsB_bact"/>
    <property type="match status" value="1"/>
</dbReference>
<dbReference type="PANTHER" id="PTHR12534">
    <property type="entry name" value="30S RIBOSOMAL PROTEIN S2 PROKARYOTIC AND ORGANELLAR"/>
    <property type="match status" value="1"/>
</dbReference>
<dbReference type="PANTHER" id="PTHR12534:SF0">
    <property type="entry name" value="SMALL RIBOSOMAL SUBUNIT PROTEIN US2M"/>
    <property type="match status" value="1"/>
</dbReference>
<dbReference type="Pfam" id="PF00318">
    <property type="entry name" value="Ribosomal_S2"/>
    <property type="match status" value="1"/>
</dbReference>
<dbReference type="PRINTS" id="PR00395">
    <property type="entry name" value="RIBOSOMALS2"/>
</dbReference>
<dbReference type="SUPFAM" id="SSF52313">
    <property type="entry name" value="Ribosomal protein S2"/>
    <property type="match status" value="1"/>
</dbReference>
<dbReference type="PROSITE" id="PS00962">
    <property type="entry name" value="RIBOSOMAL_S2_1"/>
    <property type="match status" value="1"/>
</dbReference>
<proteinExistence type="inferred from homology"/>
<comment type="similarity">
    <text evidence="1">Belongs to the universal ribosomal protein uS2 family.</text>
</comment>
<evidence type="ECO:0000255" key="1">
    <source>
        <dbReference type="HAMAP-Rule" id="MF_00291"/>
    </source>
</evidence>
<evidence type="ECO:0000256" key="2">
    <source>
        <dbReference type="SAM" id="MobiDB-lite"/>
    </source>
</evidence>
<evidence type="ECO:0000305" key="3"/>
<organism>
    <name type="scientific">Nitratidesulfovibrio vulgaris (strain DSM 19637 / Miyazaki F)</name>
    <name type="common">Desulfovibrio vulgaris</name>
    <dbReference type="NCBI Taxonomy" id="883"/>
    <lineage>
        <taxon>Bacteria</taxon>
        <taxon>Pseudomonadati</taxon>
        <taxon>Thermodesulfobacteriota</taxon>
        <taxon>Desulfovibrionia</taxon>
        <taxon>Desulfovibrionales</taxon>
        <taxon>Desulfovibrionaceae</taxon>
        <taxon>Nitratidesulfovibrio</taxon>
    </lineage>
</organism>
<accession>B8DSA6</accession>